<gene>
    <name evidence="1" type="primary">scpB</name>
    <name type="ordered locus">SGO_1670</name>
</gene>
<dbReference type="EMBL" id="CP000725">
    <property type="protein sequence ID" value="ABV10746.1"/>
    <property type="molecule type" value="Genomic_DNA"/>
</dbReference>
<dbReference type="RefSeq" id="WP_012130727.1">
    <property type="nucleotide sequence ID" value="NC_009785.1"/>
</dbReference>
<dbReference type="SMR" id="A8AYT7"/>
<dbReference type="STRING" id="467705.SGO_1670"/>
<dbReference type="KEGG" id="sgo:SGO_1670"/>
<dbReference type="eggNOG" id="COG1386">
    <property type="taxonomic scope" value="Bacteria"/>
</dbReference>
<dbReference type="HOGENOM" id="CLU_045647_5_3_9"/>
<dbReference type="Proteomes" id="UP000001131">
    <property type="component" value="Chromosome"/>
</dbReference>
<dbReference type="GO" id="GO:0005737">
    <property type="term" value="C:cytoplasm"/>
    <property type="evidence" value="ECO:0007669"/>
    <property type="project" value="UniProtKB-SubCell"/>
</dbReference>
<dbReference type="GO" id="GO:0051301">
    <property type="term" value="P:cell division"/>
    <property type="evidence" value="ECO:0007669"/>
    <property type="project" value="UniProtKB-KW"/>
</dbReference>
<dbReference type="GO" id="GO:0051304">
    <property type="term" value="P:chromosome separation"/>
    <property type="evidence" value="ECO:0007669"/>
    <property type="project" value="InterPro"/>
</dbReference>
<dbReference type="GO" id="GO:0006260">
    <property type="term" value="P:DNA replication"/>
    <property type="evidence" value="ECO:0007669"/>
    <property type="project" value="UniProtKB-UniRule"/>
</dbReference>
<dbReference type="Gene3D" id="1.10.10.10">
    <property type="entry name" value="Winged helix-like DNA-binding domain superfamily/Winged helix DNA-binding domain"/>
    <property type="match status" value="2"/>
</dbReference>
<dbReference type="HAMAP" id="MF_01804">
    <property type="entry name" value="ScpB"/>
    <property type="match status" value="1"/>
</dbReference>
<dbReference type="InterPro" id="IPR005234">
    <property type="entry name" value="ScpB_csome_segregation"/>
</dbReference>
<dbReference type="InterPro" id="IPR036388">
    <property type="entry name" value="WH-like_DNA-bd_sf"/>
</dbReference>
<dbReference type="InterPro" id="IPR036390">
    <property type="entry name" value="WH_DNA-bd_sf"/>
</dbReference>
<dbReference type="NCBIfam" id="TIGR00281">
    <property type="entry name" value="SMC-Scp complex subunit ScpB"/>
    <property type="match status" value="1"/>
</dbReference>
<dbReference type="PANTHER" id="PTHR34298">
    <property type="entry name" value="SEGREGATION AND CONDENSATION PROTEIN B"/>
    <property type="match status" value="1"/>
</dbReference>
<dbReference type="PANTHER" id="PTHR34298:SF2">
    <property type="entry name" value="SEGREGATION AND CONDENSATION PROTEIN B"/>
    <property type="match status" value="1"/>
</dbReference>
<dbReference type="Pfam" id="PF04079">
    <property type="entry name" value="SMC_ScpB"/>
    <property type="match status" value="1"/>
</dbReference>
<dbReference type="PIRSF" id="PIRSF019345">
    <property type="entry name" value="ScpB"/>
    <property type="match status" value="1"/>
</dbReference>
<dbReference type="SUPFAM" id="SSF46785">
    <property type="entry name" value="Winged helix' DNA-binding domain"/>
    <property type="match status" value="2"/>
</dbReference>
<sequence length="188" mass="20716">MSKLSEIEALLFVAGEDGLKVRQIAEILSIPPTGVSQSLEKLTAKYEADADCSLALLETSNTYKLVTKQAFAELLRAYSKSPINQSLSRAALETLSIIAYKQPITRVEIDDIRGVNSSGALAKLLAFELVREDGKKEVLGRPNLYVTTEYFLDYMGINHLEELPVVTDTELVAEESQLFGQATESELE</sequence>
<accession>A8AYT7</accession>
<evidence type="ECO:0000255" key="1">
    <source>
        <dbReference type="HAMAP-Rule" id="MF_01804"/>
    </source>
</evidence>
<comment type="function">
    <text evidence="1">Participates in chromosomal partition during cell division. May act via the formation of a condensin-like complex containing Smc and ScpA that pull DNA away from mid-cell into both cell halves.</text>
</comment>
<comment type="subunit">
    <text evidence="1">Homodimer. Homodimerization may be required to stabilize the binding of ScpA to the Smc head domains. Component of a cohesin-like complex composed of ScpA, ScpB and the Smc homodimer, in which ScpA and ScpB bind to the head domain of Smc. The presence of the three proteins is required for the association of the complex with DNA.</text>
</comment>
<comment type="subcellular location">
    <subcellularLocation>
        <location evidence="1">Cytoplasm</location>
    </subcellularLocation>
    <text evidence="1">Associated with two foci at the outer edges of the nucleoid region in young cells, and at four foci within both cell halves in older cells.</text>
</comment>
<comment type="similarity">
    <text evidence="1">Belongs to the ScpB family.</text>
</comment>
<keyword id="KW-0131">Cell cycle</keyword>
<keyword id="KW-0132">Cell division</keyword>
<keyword id="KW-0159">Chromosome partition</keyword>
<keyword id="KW-0963">Cytoplasm</keyword>
<keyword id="KW-1185">Reference proteome</keyword>
<organism>
    <name type="scientific">Streptococcus gordonii (strain Challis / ATCC 35105 / BCRC 15272 / CH1 / DL1 / V288)</name>
    <dbReference type="NCBI Taxonomy" id="467705"/>
    <lineage>
        <taxon>Bacteria</taxon>
        <taxon>Bacillati</taxon>
        <taxon>Bacillota</taxon>
        <taxon>Bacilli</taxon>
        <taxon>Lactobacillales</taxon>
        <taxon>Streptococcaceae</taxon>
        <taxon>Streptococcus</taxon>
    </lineage>
</organism>
<proteinExistence type="inferred from homology"/>
<protein>
    <recommendedName>
        <fullName evidence="1">Segregation and condensation protein B</fullName>
    </recommendedName>
</protein>
<feature type="chain" id="PRO_1000088232" description="Segregation and condensation protein B">
    <location>
        <begin position="1"/>
        <end position="188"/>
    </location>
</feature>
<name>SCPB_STRGC</name>
<reference key="1">
    <citation type="journal article" date="2007" name="J. Bacteriol.">
        <title>Genome-wide transcriptional changes in Streptococcus gordonii in response to competence signaling peptide.</title>
        <authorList>
            <person name="Vickerman M.M."/>
            <person name="Iobst S."/>
            <person name="Jesionowski A.M."/>
            <person name="Gill S.R."/>
        </authorList>
    </citation>
    <scope>NUCLEOTIDE SEQUENCE [LARGE SCALE GENOMIC DNA]</scope>
    <source>
        <strain>Challis / ATCC 35105 / BCRC 15272 / CH1 / DL1 / V288</strain>
    </source>
</reference>